<evidence type="ECO:0000255" key="1">
    <source>
        <dbReference type="HAMAP-Rule" id="MF_00815"/>
    </source>
</evidence>
<sequence length="298" mass="33243">MASLKEVKTRINSVKSTRKITSAMKMVASAKLHKAQGAIENMLPYERKLNKILTNFLSADLPVESPYIKAREVKRVAIVAFSSNTSLCGAFNANVIKMLLQTVGEFRTLGQDNILIFPVGKKVDEAVKRLGFEPQETSPTLSDKPSYQEASELAHRLMEMYVSGEIDRVELIYHHFKSMGVQILLRETYLPIDLTRVVDEEEKQKEEEVQGGEIANDYIIEPSAEELIANLIPTVLSQKLFTAAVDSNASEHAARTLAMQVATDNANELIQDLTKQYNKSRQQAITNELLDIVGGSMQ</sequence>
<feature type="chain" id="PRO_0000073238" description="ATP synthase gamma chain">
    <location>
        <begin position="1"/>
        <end position="298"/>
    </location>
</feature>
<dbReference type="EMBL" id="AE015928">
    <property type="protein sequence ID" value="AAO75826.1"/>
    <property type="molecule type" value="Genomic_DNA"/>
</dbReference>
<dbReference type="RefSeq" id="NP_809632.1">
    <property type="nucleotide sequence ID" value="NC_004663.1"/>
</dbReference>
<dbReference type="RefSeq" id="WP_008761394.1">
    <property type="nucleotide sequence ID" value="NC_004663.1"/>
</dbReference>
<dbReference type="SMR" id="Q8A9U6"/>
<dbReference type="FunCoup" id="Q8A9U6">
    <property type="interactions" value="386"/>
</dbReference>
<dbReference type="STRING" id="226186.BT_0719"/>
<dbReference type="PaxDb" id="226186-BT_0719"/>
<dbReference type="EnsemblBacteria" id="AAO75826">
    <property type="protein sequence ID" value="AAO75826"/>
    <property type="gene ID" value="BT_0719"/>
</dbReference>
<dbReference type="GeneID" id="60926688"/>
<dbReference type="KEGG" id="bth:BT_0719"/>
<dbReference type="PATRIC" id="fig|226186.12.peg.734"/>
<dbReference type="eggNOG" id="COG0224">
    <property type="taxonomic scope" value="Bacteria"/>
</dbReference>
<dbReference type="HOGENOM" id="CLU_050669_0_1_10"/>
<dbReference type="InParanoid" id="Q8A9U6"/>
<dbReference type="OrthoDB" id="9812769at2"/>
<dbReference type="Proteomes" id="UP000001414">
    <property type="component" value="Chromosome"/>
</dbReference>
<dbReference type="GO" id="GO:0005886">
    <property type="term" value="C:plasma membrane"/>
    <property type="evidence" value="ECO:0007669"/>
    <property type="project" value="UniProtKB-SubCell"/>
</dbReference>
<dbReference type="GO" id="GO:0045259">
    <property type="term" value="C:proton-transporting ATP synthase complex"/>
    <property type="evidence" value="ECO:0007669"/>
    <property type="project" value="UniProtKB-KW"/>
</dbReference>
<dbReference type="GO" id="GO:0005524">
    <property type="term" value="F:ATP binding"/>
    <property type="evidence" value="ECO:0007669"/>
    <property type="project" value="UniProtKB-UniRule"/>
</dbReference>
<dbReference type="GO" id="GO:0046933">
    <property type="term" value="F:proton-transporting ATP synthase activity, rotational mechanism"/>
    <property type="evidence" value="ECO:0007669"/>
    <property type="project" value="UniProtKB-UniRule"/>
</dbReference>
<dbReference type="GO" id="GO:0015986">
    <property type="term" value="P:proton motive force-driven ATP synthesis"/>
    <property type="evidence" value="ECO:0000318"/>
    <property type="project" value="GO_Central"/>
</dbReference>
<dbReference type="GO" id="GO:0042777">
    <property type="term" value="P:proton motive force-driven plasma membrane ATP synthesis"/>
    <property type="evidence" value="ECO:0007669"/>
    <property type="project" value="UniProtKB-UniRule"/>
</dbReference>
<dbReference type="CDD" id="cd12151">
    <property type="entry name" value="F1-ATPase_gamma"/>
    <property type="match status" value="1"/>
</dbReference>
<dbReference type="FunFam" id="3.40.1380.10:FF:000006">
    <property type="entry name" value="ATP synthase gamma chain"/>
    <property type="match status" value="1"/>
</dbReference>
<dbReference type="Gene3D" id="3.40.1380.10">
    <property type="match status" value="1"/>
</dbReference>
<dbReference type="Gene3D" id="1.10.287.80">
    <property type="entry name" value="ATP synthase, gamma subunit, helix hairpin domain"/>
    <property type="match status" value="2"/>
</dbReference>
<dbReference type="HAMAP" id="MF_00815">
    <property type="entry name" value="ATP_synth_gamma_bact"/>
    <property type="match status" value="1"/>
</dbReference>
<dbReference type="InterPro" id="IPR035968">
    <property type="entry name" value="ATP_synth_F1_ATPase_gsu"/>
</dbReference>
<dbReference type="InterPro" id="IPR000131">
    <property type="entry name" value="ATP_synth_F1_gsu"/>
</dbReference>
<dbReference type="NCBIfam" id="TIGR01146">
    <property type="entry name" value="ATPsyn_F1gamma"/>
    <property type="match status" value="1"/>
</dbReference>
<dbReference type="NCBIfam" id="NF009959">
    <property type="entry name" value="PRK13426.1"/>
    <property type="match status" value="1"/>
</dbReference>
<dbReference type="PANTHER" id="PTHR11693">
    <property type="entry name" value="ATP SYNTHASE GAMMA CHAIN"/>
    <property type="match status" value="1"/>
</dbReference>
<dbReference type="PANTHER" id="PTHR11693:SF22">
    <property type="entry name" value="ATP SYNTHASE SUBUNIT GAMMA, MITOCHONDRIAL"/>
    <property type="match status" value="1"/>
</dbReference>
<dbReference type="Pfam" id="PF00231">
    <property type="entry name" value="ATP-synt"/>
    <property type="match status" value="1"/>
</dbReference>
<dbReference type="PRINTS" id="PR00126">
    <property type="entry name" value="ATPASEGAMMA"/>
</dbReference>
<dbReference type="SUPFAM" id="SSF52943">
    <property type="entry name" value="ATP synthase (F1-ATPase), gamma subunit"/>
    <property type="match status" value="1"/>
</dbReference>
<keyword id="KW-0066">ATP synthesis</keyword>
<keyword id="KW-0997">Cell inner membrane</keyword>
<keyword id="KW-1003">Cell membrane</keyword>
<keyword id="KW-0139">CF(1)</keyword>
<keyword id="KW-0375">Hydrogen ion transport</keyword>
<keyword id="KW-0406">Ion transport</keyword>
<keyword id="KW-0472">Membrane</keyword>
<keyword id="KW-1185">Reference proteome</keyword>
<keyword id="KW-0813">Transport</keyword>
<proteinExistence type="inferred from homology"/>
<comment type="function">
    <text evidence="1">Produces ATP from ADP in the presence of a proton gradient across the membrane. The gamma chain is believed to be important in regulating ATPase activity and the flow of protons through the CF(0) complex.</text>
</comment>
<comment type="subunit">
    <text evidence="1">F-type ATPases have 2 components, CF(1) - the catalytic core - and CF(0) - the membrane proton channel. CF(1) has five subunits: alpha(3), beta(3), gamma(1), delta(1), epsilon(1). CF(0) has three main subunits: a, b and c.</text>
</comment>
<comment type="subcellular location">
    <subcellularLocation>
        <location evidence="1">Cell inner membrane</location>
        <topology evidence="1">Peripheral membrane protein</topology>
    </subcellularLocation>
</comment>
<comment type="similarity">
    <text evidence="1">Belongs to the ATPase gamma chain family.</text>
</comment>
<accession>Q8A9U6</accession>
<reference key="1">
    <citation type="journal article" date="2003" name="Science">
        <title>A genomic view of the human-Bacteroides thetaiotaomicron symbiosis.</title>
        <authorList>
            <person name="Xu J."/>
            <person name="Bjursell M.K."/>
            <person name="Himrod J."/>
            <person name="Deng S."/>
            <person name="Carmichael L.K."/>
            <person name="Chiang H.C."/>
            <person name="Hooper L.V."/>
            <person name="Gordon J.I."/>
        </authorList>
    </citation>
    <scope>NUCLEOTIDE SEQUENCE [LARGE SCALE GENOMIC DNA]</scope>
    <source>
        <strain>ATCC 29148 / DSM 2079 / JCM 5827 / CCUG 10774 / NCTC 10582 / VPI-5482 / E50</strain>
    </source>
</reference>
<organism>
    <name type="scientific">Bacteroides thetaiotaomicron (strain ATCC 29148 / DSM 2079 / JCM 5827 / CCUG 10774 / NCTC 10582 / VPI-5482 / E50)</name>
    <dbReference type="NCBI Taxonomy" id="226186"/>
    <lineage>
        <taxon>Bacteria</taxon>
        <taxon>Pseudomonadati</taxon>
        <taxon>Bacteroidota</taxon>
        <taxon>Bacteroidia</taxon>
        <taxon>Bacteroidales</taxon>
        <taxon>Bacteroidaceae</taxon>
        <taxon>Bacteroides</taxon>
    </lineage>
</organism>
<gene>
    <name evidence="1" type="primary">atpG</name>
    <name type="ordered locus">BT_0719</name>
</gene>
<protein>
    <recommendedName>
        <fullName evidence="1">ATP synthase gamma chain</fullName>
    </recommendedName>
    <alternativeName>
        <fullName evidence="1">ATP synthase F1 sector gamma subunit</fullName>
    </alternativeName>
    <alternativeName>
        <fullName evidence="1">F-ATPase gamma subunit</fullName>
    </alternativeName>
</protein>
<name>ATPG_BACTN</name>